<proteinExistence type="inferred from homology"/>
<protein>
    <recommendedName>
        <fullName evidence="1">Adenylate kinase</fullName>
        <shortName evidence="1">AK</shortName>
        <ecNumber evidence="1">2.7.4.3</ecNumber>
    </recommendedName>
    <alternativeName>
        <fullName evidence="1">ATP-AMP transphosphorylase</fullName>
    </alternativeName>
    <alternativeName>
        <fullName evidence="1">ATP:AMP phosphotransferase</fullName>
    </alternativeName>
    <alternativeName>
        <fullName evidence="1">Adenylate monophosphate kinase</fullName>
    </alternativeName>
</protein>
<accession>B0BUN9</accession>
<evidence type="ECO:0000255" key="1">
    <source>
        <dbReference type="HAMAP-Rule" id="MF_00235"/>
    </source>
</evidence>
<keyword id="KW-0067">ATP-binding</keyword>
<keyword id="KW-0963">Cytoplasm</keyword>
<keyword id="KW-0418">Kinase</keyword>
<keyword id="KW-0479">Metal-binding</keyword>
<keyword id="KW-0545">Nucleotide biosynthesis</keyword>
<keyword id="KW-0547">Nucleotide-binding</keyword>
<keyword id="KW-0808">Transferase</keyword>
<keyword id="KW-0862">Zinc</keyword>
<feature type="chain" id="PRO_1000078287" description="Adenylate kinase">
    <location>
        <begin position="1"/>
        <end position="212"/>
    </location>
</feature>
<feature type="region of interest" description="NMP" evidence="1">
    <location>
        <begin position="30"/>
        <end position="59"/>
    </location>
</feature>
<feature type="region of interest" description="LID" evidence="1">
    <location>
        <begin position="122"/>
        <end position="160"/>
    </location>
</feature>
<feature type="binding site" evidence="1">
    <location>
        <begin position="10"/>
        <end position="15"/>
    </location>
    <ligand>
        <name>ATP</name>
        <dbReference type="ChEBI" id="CHEBI:30616"/>
    </ligand>
</feature>
<feature type="binding site" evidence="1">
    <location>
        <position position="36"/>
    </location>
    <ligand>
        <name>AMP</name>
        <dbReference type="ChEBI" id="CHEBI:456215"/>
    </ligand>
</feature>
<feature type="binding site" evidence="1">
    <location>
        <begin position="57"/>
        <end position="59"/>
    </location>
    <ligand>
        <name>AMP</name>
        <dbReference type="ChEBI" id="CHEBI:456215"/>
    </ligand>
</feature>
<feature type="binding site" evidence="1">
    <location>
        <begin position="85"/>
        <end position="88"/>
    </location>
    <ligand>
        <name>AMP</name>
        <dbReference type="ChEBI" id="CHEBI:456215"/>
    </ligand>
</feature>
<feature type="binding site" evidence="1">
    <location>
        <position position="92"/>
    </location>
    <ligand>
        <name>AMP</name>
        <dbReference type="ChEBI" id="CHEBI:456215"/>
    </ligand>
</feature>
<feature type="binding site" evidence="1">
    <location>
        <position position="123"/>
    </location>
    <ligand>
        <name>ATP</name>
        <dbReference type="ChEBI" id="CHEBI:30616"/>
    </ligand>
</feature>
<feature type="binding site" evidence="1">
    <location>
        <position position="126"/>
    </location>
    <ligand>
        <name>Zn(2+)</name>
        <dbReference type="ChEBI" id="CHEBI:29105"/>
        <note>structural</note>
    </ligand>
</feature>
<feature type="binding site" evidence="1">
    <location>
        <position position="129"/>
    </location>
    <ligand>
        <name>Zn(2+)</name>
        <dbReference type="ChEBI" id="CHEBI:29105"/>
        <note>structural</note>
    </ligand>
</feature>
<feature type="binding site" evidence="1">
    <location>
        <begin position="132"/>
        <end position="133"/>
    </location>
    <ligand>
        <name>ATP</name>
        <dbReference type="ChEBI" id="CHEBI:30616"/>
    </ligand>
</feature>
<feature type="binding site" evidence="1">
    <location>
        <position position="146"/>
    </location>
    <ligand>
        <name>Zn(2+)</name>
        <dbReference type="ChEBI" id="CHEBI:29105"/>
        <note>structural</note>
    </ligand>
</feature>
<feature type="binding site" evidence="1">
    <location>
        <position position="149"/>
    </location>
    <ligand>
        <name>Zn(2+)</name>
        <dbReference type="ChEBI" id="CHEBI:29105"/>
        <note>structural</note>
    </ligand>
</feature>
<feature type="binding site" evidence="1">
    <location>
        <position position="157"/>
    </location>
    <ligand>
        <name>AMP</name>
        <dbReference type="ChEBI" id="CHEBI:456215"/>
    </ligand>
</feature>
<feature type="binding site" evidence="1">
    <location>
        <position position="168"/>
    </location>
    <ligand>
        <name>AMP</name>
        <dbReference type="ChEBI" id="CHEBI:456215"/>
    </ligand>
</feature>
<feature type="binding site" evidence="1">
    <location>
        <position position="196"/>
    </location>
    <ligand>
        <name>ATP</name>
        <dbReference type="ChEBI" id="CHEBI:30616"/>
    </ligand>
</feature>
<reference key="1">
    <citation type="journal article" date="2008" name="Infect. Immun.">
        <title>Genomic comparison of virulent Rickettsia rickettsii Sheila Smith and avirulent Rickettsia rickettsii Iowa.</title>
        <authorList>
            <person name="Ellison D.W."/>
            <person name="Clark T.R."/>
            <person name="Sturdevant D.E."/>
            <person name="Virtaneva K."/>
            <person name="Porcella S.F."/>
            <person name="Hackstadt T."/>
        </authorList>
    </citation>
    <scope>NUCLEOTIDE SEQUENCE [LARGE SCALE GENOMIC DNA]</scope>
    <source>
        <strain>Iowa</strain>
    </source>
</reference>
<comment type="function">
    <text evidence="1">Catalyzes the reversible transfer of the terminal phosphate group between ATP and AMP. Plays an important role in cellular energy homeostasis and in adenine nucleotide metabolism.</text>
</comment>
<comment type="catalytic activity">
    <reaction evidence="1">
        <text>AMP + ATP = 2 ADP</text>
        <dbReference type="Rhea" id="RHEA:12973"/>
        <dbReference type="ChEBI" id="CHEBI:30616"/>
        <dbReference type="ChEBI" id="CHEBI:456215"/>
        <dbReference type="ChEBI" id="CHEBI:456216"/>
        <dbReference type="EC" id="2.7.4.3"/>
    </reaction>
</comment>
<comment type="pathway">
    <text evidence="1">Purine metabolism; AMP biosynthesis via salvage pathway; AMP from ADP: step 1/1.</text>
</comment>
<comment type="subunit">
    <text evidence="1">Monomer.</text>
</comment>
<comment type="subcellular location">
    <subcellularLocation>
        <location evidence="1">Cytoplasm</location>
    </subcellularLocation>
</comment>
<comment type="domain">
    <text evidence="1">Consists of three domains, a large central CORE domain and two small peripheral domains, NMPbind and LID, which undergo movements during catalysis. The LID domain closes over the site of phosphoryl transfer upon ATP binding. Assembling and dissambling the active center during each catalytic cycle provides an effective means to prevent ATP hydrolysis. Some bacteria have evolved a zinc-coordinating structure that stabilizes the LID domain.</text>
</comment>
<comment type="similarity">
    <text evidence="1">Belongs to the adenylate kinase family.</text>
</comment>
<name>KAD_RICRO</name>
<sequence length="212" mass="24483">MIVIFLGPPGAGKGTQGKKIAKKIDLPHIAIGDIFRTIIKTSTSEAELINNYVRQGELIPNEIVNQVIKNFLLSFEYKNGYILDGYPRNLEQAQFFESFIKEKIKIIYFDVSGELLIKRILGRYSCKNCGKIYNRYFLQPKTDNVCDVCGSSTFDYRKDDNEEVIKKRIEVYKTETYPLIDYYKNSGNFYIVNGSKNEQEIAMDIQKILKIN</sequence>
<dbReference type="EC" id="2.7.4.3" evidence="1"/>
<dbReference type="EMBL" id="CP000766">
    <property type="protein sequence ID" value="ABY72949.1"/>
    <property type="molecule type" value="Genomic_DNA"/>
</dbReference>
<dbReference type="RefSeq" id="WP_012151136.1">
    <property type="nucleotide sequence ID" value="NC_010263.3"/>
</dbReference>
<dbReference type="SMR" id="B0BUN9"/>
<dbReference type="KEGG" id="rrj:RrIowa_1176"/>
<dbReference type="eggNOG" id="COG0563">
    <property type="taxonomic scope" value="Bacteria"/>
</dbReference>
<dbReference type="HOGENOM" id="CLU_032354_1_2_5"/>
<dbReference type="UniPathway" id="UPA00588">
    <property type="reaction ID" value="UER00649"/>
</dbReference>
<dbReference type="Proteomes" id="UP000000796">
    <property type="component" value="Chromosome"/>
</dbReference>
<dbReference type="GO" id="GO:0005737">
    <property type="term" value="C:cytoplasm"/>
    <property type="evidence" value="ECO:0007669"/>
    <property type="project" value="UniProtKB-SubCell"/>
</dbReference>
<dbReference type="GO" id="GO:0004017">
    <property type="term" value="F:adenylate kinase activity"/>
    <property type="evidence" value="ECO:0007669"/>
    <property type="project" value="UniProtKB-UniRule"/>
</dbReference>
<dbReference type="GO" id="GO:0005524">
    <property type="term" value="F:ATP binding"/>
    <property type="evidence" value="ECO:0007669"/>
    <property type="project" value="UniProtKB-UniRule"/>
</dbReference>
<dbReference type="GO" id="GO:0008270">
    <property type="term" value="F:zinc ion binding"/>
    <property type="evidence" value="ECO:0007669"/>
    <property type="project" value="UniProtKB-UniRule"/>
</dbReference>
<dbReference type="GO" id="GO:0044209">
    <property type="term" value="P:AMP salvage"/>
    <property type="evidence" value="ECO:0007669"/>
    <property type="project" value="UniProtKB-UniRule"/>
</dbReference>
<dbReference type="CDD" id="cd01428">
    <property type="entry name" value="ADK"/>
    <property type="match status" value="1"/>
</dbReference>
<dbReference type="Gene3D" id="3.40.50.300">
    <property type="entry name" value="P-loop containing nucleotide triphosphate hydrolases"/>
    <property type="match status" value="1"/>
</dbReference>
<dbReference type="HAMAP" id="MF_00235">
    <property type="entry name" value="Adenylate_kinase_Adk"/>
    <property type="match status" value="1"/>
</dbReference>
<dbReference type="InterPro" id="IPR006259">
    <property type="entry name" value="Adenyl_kin_sub"/>
</dbReference>
<dbReference type="InterPro" id="IPR000850">
    <property type="entry name" value="Adenylat/UMP-CMP_kin"/>
</dbReference>
<dbReference type="InterPro" id="IPR033690">
    <property type="entry name" value="Adenylat_kinase_CS"/>
</dbReference>
<dbReference type="InterPro" id="IPR007862">
    <property type="entry name" value="Adenylate_kinase_lid-dom"/>
</dbReference>
<dbReference type="InterPro" id="IPR036193">
    <property type="entry name" value="ADK_active_lid_dom_sf"/>
</dbReference>
<dbReference type="InterPro" id="IPR027417">
    <property type="entry name" value="P-loop_NTPase"/>
</dbReference>
<dbReference type="NCBIfam" id="TIGR01351">
    <property type="entry name" value="adk"/>
    <property type="match status" value="1"/>
</dbReference>
<dbReference type="NCBIfam" id="NF001383">
    <property type="entry name" value="PRK00279.2-1"/>
    <property type="match status" value="1"/>
</dbReference>
<dbReference type="PANTHER" id="PTHR23359">
    <property type="entry name" value="NUCLEOTIDE KINASE"/>
    <property type="match status" value="1"/>
</dbReference>
<dbReference type="Pfam" id="PF00406">
    <property type="entry name" value="ADK"/>
    <property type="match status" value="1"/>
</dbReference>
<dbReference type="Pfam" id="PF05191">
    <property type="entry name" value="ADK_lid"/>
    <property type="match status" value="1"/>
</dbReference>
<dbReference type="PRINTS" id="PR00094">
    <property type="entry name" value="ADENYLTKNASE"/>
</dbReference>
<dbReference type="SUPFAM" id="SSF57774">
    <property type="entry name" value="Microbial and mitochondrial ADK, insert 'zinc finger' domain"/>
    <property type="match status" value="1"/>
</dbReference>
<dbReference type="SUPFAM" id="SSF52540">
    <property type="entry name" value="P-loop containing nucleoside triphosphate hydrolases"/>
    <property type="match status" value="1"/>
</dbReference>
<dbReference type="PROSITE" id="PS00113">
    <property type="entry name" value="ADENYLATE_KINASE"/>
    <property type="match status" value="1"/>
</dbReference>
<gene>
    <name evidence="1" type="primary">adk</name>
    <name type="ordered locus">RrIowa_1176</name>
</gene>
<organism>
    <name type="scientific">Rickettsia rickettsii (strain Iowa)</name>
    <dbReference type="NCBI Taxonomy" id="452659"/>
    <lineage>
        <taxon>Bacteria</taxon>
        <taxon>Pseudomonadati</taxon>
        <taxon>Pseudomonadota</taxon>
        <taxon>Alphaproteobacteria</taxon>
        <taxon>Rickettsiales</taxon>
        <taxon>Rickettsiaceae</taxon>
        <taxon>Rickettsieae</taxon>
        <taxon>Rickettsia</taxon>
        <taxon>spotted fever group</taxon>
    </lineage>
</organism>